<sequence>MATHVAIIGNGVAGFTTAQALRAEGFEGRISLIGNEPHLPYDRPSLSKAVLGGSLEHPPVLAEADWYGEARIDMLSGRSVTNLNVDARTISLDDGSTFAADAIVIATGSRARTLALPGSQLTGVVTLRTNDDVRPLCRGWTPATRLVIAGGGLIGCEVATTARKLGLAVTILESADELLVRVLGRRIGAWLRGLLTELGVRVELGTGVAGFSGDDRLEEVLASDGRRFAADNALVCIGAEPEDQLARQAGLSCDRGVIVDDHGATHAEGVFAVGDAASWPLRDGGRRSLETYMNAQRQAAAVAAAILGKHGSAPQVPVSWTEIAGHRMQMAGDIEGPGEFVLRGTLGDGAALLFRLRDGRIQAVVAVDAPRDFAMAARLVEARAAIEPARLADFSNSMRDLVRAQQGDSA</sequence>
<accession>O24679</accession>
<reference key="1">
    <citation type="journal article" date="1997" name="Eur. J. Biochem.">
        <title>Genetic and biochemical characterization of the broad spectrum chlorobenzene dioxygenase from Burkholderia sp. strain PS12--dechlorination of 1,2,4,5-tetrachlorobenzene.</title>
        <authorList>
            <person name="Beil S."/>
            <person name="Happe B."/>
            <person name="Timmis K.N."/>
            <person name="Pieper D.H."/>
        </authorList>
    </citation>
    <scope>NUCLEOTIDE SEQUENCE [GENOMIC DNA]</scope>
    <scope>FUNCTION</scope>
    <scope>SUBUNIT</scope>
    <source>
        <strain>PS12</strain>
    </source>
</reference>
<reference key="2">
    <citation type="journal article" date="2001" name="Appl. Environ. Microbiol.">
        <title>Transformation of chlorinated benzenes and toluenes by Ralstonia sp. strain PS12 tecA (tetrachlorobenzene dioxygenase) and tecB (chlorobenzene dihydrodiol dehydrogenase) gene products.</title>
        <authorList>
            <person name="Pollmann K."/>
            <person name="Beil S."/>
            <person name="Pieper D.H."/>
        </authorList>
    </citation>
    <scope>FUNCTION</scope>
    <source>
        <strain>PS12</strain>
    </source>
</reference>
<protein>
    <recommendedName>
        <fullName evidence="7">Chlorobenzene dioxygenase, ferredoxin reductase component</fullName>
        <ecNumber evidence="2">1.18.1.3</ecNumber>
    </recommendedName>
</protein>
<feature type="chain" id="PRO_0000453518" description="Chlorobenzene dioxygenase, ferredoxin reductase component">
    <location>
        <begin position="1"/>
        <end position="410"/>
    </location>
</feature>
<feature type="binding site" evidence="3">
    <location>
        <begin position="4"/>
        <end position="35"/>
    </location>
    <ligand>
        <name>FAD</name>
        <dbReference type="ChEBI" id="CHEBI:57692"/>
    </ligand>
</feature>
<feature type="binding site" evidence="3">
    <location>
        <begin position="145"/>
        <end position="173"/>
    </location>
    <ligand>
        <name>NAD(+)</name>
        <dbReference type="ChEBI" id="CHEBI:57540"/>
    </ligand>
</feature>
<gene>
    <name evidence="6" type="primary">tecA4</name>
</gene>
<name>TECA4_CUPXP</name>
<keyword id="KW-0058">Aromatic hydrocarbons catabolism</keyword>
<keyword id="KW-0274">FAD</keyword>
<keyword id="KW-0285">Flavoprotein</keyword>
<keyword id="KW-0520">NAD</keyword>
<keyword id="KW-0560">Oxidoreductase</keyword>
<proteinExistence type="evidence at protein level"/>
<evidence type="ECO:0000250" key="1">
    <source>
        <dbReference type="UniProtKB" id="O85675"/>
    </source>
</evidence>
<evidence type="ECO:0000250" key="2">
    <source>
        <dbReference type="UniProtKB" id="Q0S032"/>
    </source>
</evidence>
<evidence type="ECO:0000255" key="3"/>
<evidence type="ECO:0000269" key="4">
    <source>
    </source>
</evidence>
<evidence type="ECO:0000269" key="5">
    <source>
    </source>
</evidence>
<evidence type="ECO:0000303" key="6">
    <source>
    </source>
</evidence>
<evidence type="ECO:0000305" key="7"/>
<evidence type="ECO:0000305" key="8">
    <source>
    </source>
</evidence>
<organism>
    <name type="scientific">Cupriavidus sp. (strain PS12)</name>
    <dbReference type="NCBI Taxonomy" id="393999"/>
    <lineage>
        <taxon>Bacteria</taxon>
        <taxon>Pseudomonadati</taxon>
        <taxon>Pseudomonadota</taxon>
        <taxon>Betaproteobacteria</taxon>
        <taxon>Burkholderiales</taxon>
        <taxon>Burkholderiaceae</taxon>
        <taxon>Cupriavidus</taxon>
    </lineage>
</organism>
<comment type="function">
    <text evidence="4 5">Part of the chlorobenzene dioxygenase system that catalyzes the dihydroxylation of a range of aromatic compounds, including chlorinated benzenes and toluenes, and dinuclear aromatics such as biphenyl and dibenzo-p-dioxin.</text>
</comment>
<comment type="catalytic activity">
    <reaction evidence="2">
        <text>2 reduced [2Fe-2S]-[ferredoxin] + NAD(+) + H(+) = 2 oxidized [2Fe-2S]-[ferredoxin] + NADH</text>
        <dbReference type="Rhea" id="RHEA:16521"/>
        <dbReference type="Rhea" id="RHEA-COMP:10000"/>
        <dbReference type="Rhea" id="RHEA-COMP:10001"/>
        <dbReference type="ChEBI" id="CHEBI:15378"/>
        <dbReference type="ChEBI" id="CHEBI:33737"/>
        <dbReference type="ChEBI" id="CHEBI:33738"/>
        <dbReference type="ChEBI" id="CHEBI:57540"/>
        <dbReference type="ChEBI" id="CHEBI:57945"/>
        <dbReference type="EC" id="1.18.1.3"/>
    </reaction>
</comment>
<comment type="cofactor">
    <cofactor evidence="1">
        <name>FAD</name>
        <dbReference type="ChEBI" id="CHEBI:57692"/>
    </cofactor>
</comment>
<comment type="pathway">
    <text evidence="7">Aromatic compound metabolism.</text>
</comment>
<comment type="subunit">
    <text evidence="8">This dioxygenase system consists of four proteins: the two subunits of the oxygenase component (TecA1 and TecA2), a ferredoxin (TecA3) and a ferredoxin reductase (TecA4).</text>
</comment>
<comment type="similarity">
    <text evidence="7">Belongs to the bacterial ring-hydroxylating dioxygenase ferredoxin reductase family.</text>
</comment>
<dbReference type="EC" id="1.18.1.3" evidence="2"/>
<dbReference type="EMBL" id="U78099">
    <property type="protein sequence ID" value="AAC46393.1"/>
    <property type="molecule type" value="Genomic_DNA"/>
</dbReference>
<dbReference type="SMR" id="O24679"/>
<dbReference type="BioCyc" id="MetaCyc:MONOMER-14393"/>
<dbReference type="GO" id="GO:0005737">
    <property type="term" value="C:cytoplasm"/>
    <property type="evidence" value="ECO:0007669"/>
    <property type="project" value="TreeGrafter"/>
</dbReference>
<dbReference type="GO" id="GO:0016651">
    <property type="term" value="F:oxidoreductase activity, acting on NAD(P)H"/>
    <property type="evidence" value="ECO:0007669"/>
    <property type="project" value="TreeGrafter"/>
</dbReference>
<dbReference type="GO" id="GO:0009056">
    <property type="term" value="P:catabolic process"/>
    <property type="evidence" value="ECO:0007669"/>
    <property type="project" value="UniProtKB-KW"/>
</dbReference>
<dbReference type="Gene3D" id="3.30.390.30">
    <property type="match status" value="1"/>
</dbReference>
<dbReference type="Gene3D" id="3.50.50.60">
    <property type="entry name" value="FAD/NAD(P)-binding domain"/>
    <property type="match status" value="2"/>
</dbReference>
<dbReference type="InterPro" id="IPR050446">
    <property type="entry name" value="FAD-oxidoreductase/Apoptosis"/>
</dbReference>
<dbReference type="InterPro" id="IPR036188">
    <property type="entry name" value="FAD/NAD-bd_sf"/>
</dbReference>
<dbReference type="InterPro" id="IPR023753">
    <property type="entry name" value="FAD/NAD-binding_dom"/>
</dbReference>
<dbReference type="InterPro" id="IPR016156">
    <property type="entry name" value="FAD/NAD-linked_Rdtase_dimer_sf"/>
</dbReference>
<dbReference type="InterPro" id="IPR028202">
    <property type="entry name" value="Reductase_C"/>
</dbReference>
<dbReference type="PANTHER" id="PTHR43557">
    <property type="entry name" value="APOPTOSIS-INDUCING FACTOR 1"/>
    <property type="match status" value="1"/>
</dbReference>
<dbReference type="PANTHER" id="PTHR43557:SF2">
    <property type="entry name" value="RIESKE DOMAIN-CONTAINING PROTEIN-RELATED"/>
    <property type="match status" value="1"/>
</dbReference>
<dbReference type="Pfam" id="PF07992">
    <property type="entry name" value="Pyr_redox_2"/>
    <property type="match status" value="1"/>
</dbReference>
<dbReference type="Pfam" id="PF14759">
    <property type="entry name" value="Reductase_C"/>
    <property type="match status" value="1"/>
</dbReference>
<dbReference type="PRINTS" id="PR00368">
    <property type="entry name" value="FADPNR"/>
</dbReference>
<dbReference type="PRINTS" id="PR00411">
    <property type="entry name" value="PNDRDTASEI"/>
</dbReference>
<dbReference type="SUPFAM" id="SSF51905">
    <property type="entry name" value="FAD/NAD(P)-binding domain"/>
    <property type="match status" value="2"/>
</dbReference>
<dbReference type="SUPFAM" id="SSF55424">
    <property type="entry name" value="FAD/NAD-linked reductases, dimerisation (C-terminal) domain"/>
    <property type="match status" value="1"/>
</dbReference>